<evidence type="ECO:0000255" key="1">
    <source>
        <dbReference type="HAMAP-Rule" id="MF_01456"/>
    </source>
</evidence>
<sequence length="100" mass="10818">MIPLTHGLILAAILFVLGLTGLVIRRNLLFMLIGLEIMINASALAFVVAGSYWGQTDGQVMYILAISLAAAEASIGLALLLQLHRRRQNLNIDSVSEMRG</sequence>
<name>NUOK_SALPA</name>
<protein>
    <recommendedName>
        <fullName evidence="1">NADH-quinone oxidoreductase subunit K</fullName>
        <ecNumber evidence="1">7.1.1.-</ecNumber>
    </recommendedName>
    <alternativeName>
        <fullName evidence="1">NADH dehydrogenase I subunit K</fullName>
    </alternativeName>
    <alternativeName>
        <fullName evidence="1">NDH-1 subunit K</fullName>
    </alternativeName>
</protein>
<accession>Q5PN65</accession>
<reference key="1">
    <citation type="journal article" date="2004" name="Nat. Genet.">
        <title>Comparison of genome degradation in Paratyphi A and Typhi, human-restricted serovars of Salmonella enterica that cause typhoid.</title>
        <authorList>
            <person name="McClelland M."/>
            <person name="Sanderson K.E."/>
            <person name="Clifton S.W."/>
            <person name="Latreille P."/>
            <person name="Porwollik S."/>
            <person name="Sabo A."/>
            <person name="Meyer R."/>
            <person name="Bieri T."/>
            <person name="Ozersky P."/>
            <person name="McLellan M."/>
            <person name="Harkins C.R."/>
            <person name="Wang C."/>
            <person name="Nguyen C."/>
            <person name="Berghoff A."/>
            <person name="Elliott G."/>
            <person name="Kohlberg S."/>
            <person name="Strong C."/>
            <person name="Du F."/>
            <person name="Carter J."/>
            <person name="Kremizki C."/>
            <person name="Layman D."/>
            <person name="Leonard S."/>
            <person name="Sun H."/>
            <person name="Fulton L."/>
            <person name="Nash W."/>
            <person name="Miner T."/>
            <person name="Minx P."/>
            <person name="Delehaunty K."/>
            <person name="Fronick C."/>
            <person name="Magrini V."/>
            <person name="Nhan M."/>
            <person name="Warren W."/>
            <person name="Florea L."/>
            <person name="Spieth J."/>
            <person name="Wilson R.K."/>
        </authorList>
    </citation>
    <scope>NUCLEOTIDE SEQUENCE [LARGE SCALE GENOMIC DNA]</scope>
    <source>
        <strain>ATCC 9150 / SARB42</strain>
    </source>
</reference>
<comment type="function">
    <text evidence="1">NDH-1 shuttles electrons from NADH, via FMN and iron-sulfur (Fe-S) centers, to quinones in the respiratory chain. The immediate electron acceptor for the enzyme in this species is believed to be ubiquinone. Couples the redox reaction to proton translocation (for every two electrons transferred, four hydrogen ions are translocated across the cytoplasmic membrane), and thus conserves the redox energy in a proton gradient.</text>
</comment>
<comment type="catalytic activity">
    <reaction evidence="1">
        <text>a quinone + NADH + 5 H(+)(in) = a quinol + NAD(+) + 4 H(+)(out)</text>
        <dbReference type="Rhea" id="RHEA:57888"/>
        <dbReference type="ChEBI" id="CHEBI:15378"/>
        <dbReference type="ChEBI" id="CHEBI:24646"/>
        <dbReference type="ChEBI" id="CHEBI:57540"/>
        <dbReference type="ChEBI" id="CHEBI:57945"/>
        <dbReference type="ChEBI" id="CHEBI:132124"/>
    </reaction>
</comment>
<comment type="subunit">
    <text evidence="1">NDH-1 is composed of 13 different subunits. Subunits NuoA, H, J, K, L, M, N constitute the membrane sector of the complex.</text>
</comment>
<comment type="subcellular location">
    <subcellularLocation>
        <location evidence="1">Cell inner membrane</location>
        <topology evidence="1">Multi-pass membrane protein</topology>
    </subcellularLocation>
</comment>
<comment type="similarity">
    <text evidence="1">Belongs to the complex I subunit 4L family.</text>
</comment>
<feature type="chain" id="PRO_0000390226" description="NADH-quinone oxidoreductase subunit K">
    <location>
        <begin position="1"/>
        <end position="100"/>
    </location>
</feature>
<feature type="transmembrane region" description="Helical" evidence="1">
    <location>
        <begin position="4"/>
        <end position="24"/>
    </location>
</feature>
<feature type="transmembrane region" description="Helical" evidence="1">
    <location>
        <begin position="28"/>
        <end position="48"/>
    </location>
</feature>
<feature type="transmembrane region" description="Helical" evidence="1">
    <location>
        <begin position="60"/>
        <end position="80"/>
    </location>
</feature>
<organism>
    <name type="scientific">Salmonella paratyphi A (strain ATCC 9150 / SARB42)</name>
    <dbReference type="NCBI Taxonomy" id="295319"/>
    <lineage>
        <taxon>Bacteria</taxon>
        <taxon>Pseudomonadati</taxon>
        <taxon>Pseudomonadota</taxon>
        <taxon>Gammaproteobacteria</taxon>
        <taxon>Enterobacterales</taxon>
        <taxon>Enterobacteriaceae</taxon>
        <taxon>Salmonella</taxon>
    </lineage>
</organism>
<proteinExistence type="inferred from homology"/>
<gene>
    <name evidence="1" type="primary">nuoK</name>
    <name type="ordered locus">SPA0545</name>
</gene>
<keyword id="KW-0997">Cell inner membrane</keyword>
<keyword id="KW-1003">Cell membrane</keyword>
<keyword id="KW-0472">Membrane</keyword>
<keyword id="KW-0520">NAD</keyword>
<keyword id="KW-0874">Quinone</keyword>
<keyword id="KW-1278">Translocase</keyword>
<keyword id="KW-0812">Transmembrane</keyword>
<keyword id="KW-1133">Transmembrane helix</keyword>
<keyword id="KW-0813">Transport</keyword>
<keyword id="KW-0830">Ubiquinone</keyword>
<dbReference type="EC" id="7.1.1.-" evidence="1"/>
<dbReference type="EMBL" id="CP000026">
    <property type="protein sequence ID" value="AAV76547.1"/>
    <property type="molecule type" value="Genomic_DNA"/>
</dbReference>
<dbReference type="RefSeq" id="WP_000612687.1">
    <property type="nucleotide sequence ID" value="NC_006511.1"/>
</dbReference>
<dbReference type="SMR" id="Q5PN65"/>
<dbReference type="KEGG" id="spt:SPA0545"/>
<dbReference type="HOGENOM" id="CLU_144724_0_1_6"/>
<dbReference type="Proteomes" id="UP000008185">
    <property type="component" value="Chromosome"/>
</dbReference>
<dbReference type="GO" id="GO:0030964">
    <property type="term" value="C:NADH dehydrogenase complex"/>
    <property type="evidence" value="ECO:0007669"/>
    <property type="project" value="TreeGrafter"/>
</dbReference>
<dbReference type="GO" id="GO:0005886">
    <property type="term" value="C:plasma membrane"/>
    <property type="evidence" value="ECO:0007669"/>
    <property type="project" value="UniProtKB-SubCell"/>
</dbReference>
<dbReference type="GO" id="GO:0050136">
    <property type="term" value="F:NADH:ubiquinone reductase (non-electrogenic) activity"/>
    <property type="evidence" value="ECO:0007669"/>
    <property type="project" value="UniProtKB-UniRule"/>
</dbReference>
<dbReference type="GO" id="GO:0048038">
    <property type="term" value="F:quinone binding"/>
    <property type="evidence" value="ECO:0007669"/>
    <property type="project" value="UniProtKB-KW"/>
</dbReference>
<dbReference type="GO" id="GO:0042773">
    <property type="term" value="P:ATP synthesis coupled electron transport"/>
    <property type="evidence" value="ECO:0007669"/>
    <property type="project" value="InterPro"/>
</dbReference>
<dbReference type="FunFam" id="1.10.287.3510:FF:000001">
    <property type="entry name" value="NADH-quinone oxidoreductase subunit K"/>
    <property type="match status" value="1"/>
</dbReference>
<dbReference type="Gene3D" id="1.10.287.3510">
    <property type="match status" value="1"/>
</dbReference>
<dbReference type="HAMAP" id="MF_01456">
    <property type="entry name" value="NDH1_NuoK"/>
    <property type="match status" value="1"/>
</dbReference>
<dbReference type="InterPro" id="IPR001133">
    <property type="entry name" value="NADH_UbQ_OxRdtase_chain4L/K"/>
</dbReference>
<dbReference type="InterPro" id="IPR039428">
    <property type="entry name" value="NUOK/Mnh_C1-like"/>
</dbReference>
<dbReference type="NCBIfam" id="NF004319">
    <property type="entry name" value="PRK05715.1-1"/>
    <property type="match status" value="1"/>
</dbReference>
<dbReference type="NCBIfam" id="NF004320">
    <property type="entry name" value="PRK05715.1-2"/>
    <property type="match status" value="1"/>
</dbReference>
<dbReference type="PANTHER" id="PTHR11434:SF16">
    <property type="entry name" value="NADH-UBIQUINONE OXIDOREDUCTASE CHAIN 4L"/>
    <property type="match status" value="1"/>
</dbReference>
<dbReference type="PANTHER" id="PTHR11434">
    <property type="entry name" value="NADH-UBIQUINONE OXIDOREDUCTASE SUBUNIT ND4L"/>
    <property type="match status" value="1"/>
</dbReference>
<dbReference type="Pfam" id="PF00420">
    <property type="entry name" value="Oxidored_q2"/>
    <property type="match status" value="1"/>
</dbReference>